<feature type="chain" id="PRO_0000391081" description="Probable sensor histidine kinase HK">
    <location>
        <begin position="1"/>
        <end position="377"/>
    </location>
</feature>
<feature type="domain" description="Histidine kinase" evidence="2">
    <location>
        <begin position="146"/>
        <end position="350"/>
    </location>
</feature>
<feature type="region of interest" description="Disordered" evidence="3">
    <location>
        <begin position="1"/>
        <end position="169"/>
    </location>
</feature>
<feature type="region of interest" description="Disordered" evidence="3">
    <location>
        <begin position="346"/>
        <end position="377"/>
    </location>
</feature>
<feature type="compositionally biased region" description="Basic residues" evidence="3">
    <location>
        <begin position="10"/>
        <end position="54"/>
    </location>
</feature>
<feature type="compositionally biased region" description="Basic and acidic residues" evidence="3">
    <location>
        <begin position="84"/>
        <end position="98"/>
    </location>
</feature>
<feature type="compositionally biased region" description="Basic residues" evidence="3">
    <location>
        <begin position="99"/>
        <end position="115"/>
    </location>
</feature>
<feature type="compositionally biased region" description="Basic residues" evidence="3">
    <location>
        <begin position="137"/>
        <end position="146"/>
    </location>
</feature>
<feature type="compositionally biased region" description="Basic and acidic residues" evidence="3">
    <location>
        <begin position="352"/>
        <end position="377"/>
    </location>
</feature>
<feature type="modified residue" description="Phosphohistidine; by autocatalysis" evidence="2">
    <location>
        <position position="149"/>
    </location>
</feature>
<keyword id="KW-0067">ATP-binding</keyword>
<keyword id="KW-0418">Kinase</keyword>
<keyword id="KW-0547">Nucleotide-binding</keyword>
<keyword id="KW-0597">Phosphoprotein</keyword>
<keyword id="KW-1185">Reference proteome</keyword>
<keyword id="KW-0808">Transferase</keyword>
<keyword id="KW-0902">Two-component regulatory system</keyword>
<protein>
    <recommendedName>
        <fullName>Probable sensor histidine kinase HK</fullName>
        <ecNumber>2.7.13.3</ecNumber>
    </recommendedName>
</protein>
<organism>
    <name type="scientific">Mycobacterium tuberculosis (strain CDC 1551 / Oshkosh)</name>
    <dbReference type="NCBI Taxonomy" id="83331"/>
    <lineage>
        <taxon>Bacteria</taxon>
        <taxon>Bacillati</taxon>
        <taxon>Actinomycetota</taxon>
        <taxon>Actinomycetes</taxon>
        <taxon>Mycobacteriales</taxon>
        <taxon>Mycobacteriaceae</taxon>
        <taxon>Mycobacterium</taxon>
        <taxon>Mycobacterium tuberculosis complex</taxon>
    </lineage>
</organism>
<comment type="function">
    <text evidence="1">Member of the two-component system HK/TcrA. Phosphorylates TcrA (By similarity).</text>
</comment>
<comment type="catalytic activity">
    <reaction>
        <text>ATP + protein L-histidine = ADP + protein N-phospho-L-histidine.</text>
        <dbReference type="EC" id="2.7.13.3"/>
    </reaction>
</comment>
<comment type="PTM">
    <text evidence="4">Autophosphorylated.</text>
</comment>
<comment type="miscellaneous">
    <text>HK is composed of two separate proteins (HK1 and HK2) with a distinct N-terminal sequence in strain ATCC 25618 / H37Rv.</text>
</comment>
<accession>Q7D9K1</accession>
<evidence type="ECO:0000250" key="1"/>
<evidence type="ECO:0000255" key="2">
    <source>
        <dbReference type="PROSITE-ProRule" id="PRU00107"/>
    </source>
</evidence>
<evidence type="ECO:0000256" key="3">
    <source>
        <dbReference type="SAM" id="MobiDB-lite"/>
    </source>
</evidence>
<evidence type="ECO:0000305" key="4"/>
<reference key="1">
    <citation type="journal article" date="2002" name="J. Bacteriol.">
        <title>Whole-genome comparison of Mycobacterium tuberculosis clinical and laboratory strains.</title>
        <authorList>
            <person name="Fleischmann R.D."/>
            <person name="Alland D."/>
            <person name="Eisen J.A."/>
            <person name="Carpenter L."/>
            <person name="White O."/>
            <person name="Peterson J.D."/>
            <person name="DeBoy R.T."/>
            <person name="Dodson R.J."/>
            <person name="Gwinn M.L."/>
            <person name="Haft D.H."/>
            <person name="Hickey E.K."/>
            <person name="Kolonay J.F."/>
            <person name="Nelson W.C."/>
            <person name="Umayam L.A."/>
            <person name="Ermolaeva M.D."/>
            <person name="Salzberg S.L."/>
            <person name="Delcher A."/>
            <person name="Utterback T.R."/>
            <person name="Weidman J.F."/>
            <person name="Khouri H.M."/>
            <person name="Gill J."/>
            <person name="Mikula A."/>
            <person name="Bishai W."/>
            <person name="Jacobs W.R. Jr."/>
            <person name="Venter J.C."/>
            <person name="Fraser C.M."/>
        </authorList>
    </citation>
    <scope>NUCLEOTIDE SEQUENCE [LARGE SCALE GENOMIC DNA]</scope>
    <source>
        <strain>CDC 1551 / Oshkosh</strain>
    </source>
</reference>
<name>HK12_MYCTO</name>
<dbReference type="EC" id="2.7.13.3"/>
<dbReference type="EMBL" id="AE000516">
    <property type="protein sequence ID" value="AAK44854.1"/>
    <property type="molecule type" value="Genomic_DNA"/>
</dbReference>
<dbReference type="SMR" id="Q7D9K1"/>
<dbReference type="KEGG" id="mtc:MT0630"/>
<dbReference type="HOGENOM" id="CLU_733242_0_0_11"/>
<dbReference type="Proteomes" id="UP000001020">
    <property type="component" value="Chromosome"/>
</dbReference>
<dbReference type="GO" id="GO:0005524">
    <property type="term" value="F:ATP binding"/>
    <property type="evidence" value="ECO:0007669"/>
    <property type="project" value="UniProtKB-KW"/>
</dbReference>
<dbReference type="GO" id="GO:0004673">
    <property type="term" value="F:protein histidine kinase activity"/>
    <property type="evidence" value="ECO:0007669"/>
    <property type="project" value="UniProtKB-EC"/>
</dbReference>
<dbReference type="GO" id="GO:0000160">
    <property type="term" value="P:phosphorelay signal transduction system"/>
    <property type="evidence" value="ECO:0007669"/>
    <property type="project" value="UniProtKB-KW"/>
</dbReference>
<dbReference type="CDD" id="cd00075">
    <property type="entry name" value="HATPase"/>
    <property type="match status" value="1"/>
</dbReference>
<dbReference type="Gene3D" id="3.30.565.10">
    <property type="entry name" value="Histidine kinase-like ATPase, C-terminal domain"/>
    <property type="match status" value="1"/>
</dbReference>
<dbReference type="InterPro" id="IPR050980">
    <property type="entry name" value="2C_sensor_his_kinase"/>
</dbReference>
<dbReference type="InterPro" id="IPR036890">
    <property type="entry name" value="HATPase_C_sf"/>
</dbReference>
<dbReference type="InterPro" id="IPR005467">
    <property type="entry name" value="His_kinase_dom"/>
</dbReference>
<dbReference type="InterPro" id="IPR004358">
    <property type="entry name" value="Sig_transdc_His_kin-like_C"/>
</dbReference>
<dbReference type="PANTHER" id="PTHR44936">
    <property type="entry name" value="SENSOR PROTEIN CREC"/>
    <property type="match status" value="1"/>
</dbReference>
<dbReference type="PANTHER" id="PTHR44936:SF9">
    <property type="entry name" value="SENSOR PROTEIN CREC"/>
    <property type="match status" value="1"/>
</dbReference>
<dbReference type="Pfam" id="PF02518">
    <property type="entry name" value="HATPase_c"/>
    <property type="match status" value="1"/>
</dbReference>
<dbReference type="PRINTS" id="PR00344">
    <property type="entry name" value="BCTRLSENSOR"/>
</dbReference>
<dbReference type="SMART" id="SM00387">
    <property type="entry name" value="HATPase_c"/>
    <property type="match status" value="1"/>
</dbReference>
<dbReference type="SUPFAM" id="SSF55874">
    <property type="entry name" value="ATPase domain of HSP90 chaperone/DNA topoisomerase II/histidine kinase"/>
    <property type="match status" value="1"/>
</dbReference>
<dbReference type="PROSITE" id="PS50109">
    <property type="entry name" value="HIS_KIN"/>
    <property type="match status" value="1"/>
</dbReference>
<gene>
    <name type="ordered locus">MT0630</name>
</gene>
<proteinExistence type="inferred from homology"/>
<sequence>MAHPMATHPRLQRRHGARSGSSRCRHRRPVPRRRSRSRPRWRAARAHRRHHRRSGPGIGDHPADRARHRRGGRLPAQPRRAAARRPDPRGGANTDHHAAPRHRRAAAGTSHRRRDRLASNDSQHHAHPTATGPRPRTTVRRRRQPRITHPVGTADHRTRTALRRPRPADQLSAALRSALEETRRLSGLADQLLTLARADRPESHPSAKAVPITPLLHESVARFAATGADITTRAEPDLFVSIDPDHLRRILTAVLDNAITHGDGEIAVTAHARDGAVDIGVRDHGPGFADHFLPVAFDRFTRADTARGGRGSGLGLAIVAALTTTHGGHANATNHPDGGAELRITLPTPRPPFHEELPRITSSDTKDPNREHDTSDQ</sequence>